<protein>
    <recommendedName>
        <fullName>Serotonin N-acetyltransferase</fullName>
        <shortName>Serotonin acetylase</shortName>
        <ecNumber evidence="4">2.3.1.87</ecNumber>
    </recommendedName>
    <alternativeName>
        <fullName>Aralkylamine N-acetyltransferase</fullName>
        <shortName>AA-NAT</shortName>
    </alternativeName>
</protein>
<sequence>MPMLSPHSLKPDTLHLPPGTSEFLGCQRRHTLPASEFRCLTPQDAISVFEIEREAFISVSGTCPLYLDEIRHFLTLCPELSLGWFEEGRLVAFIIGSLWDKERLTQESLTLHRPGGRTAHLHVLAVHRTFRQQGKGSVLLWRYLHHLGSQPAVRRAVLMCEDALVPFYEKFGFQAVGPCAVTVGSLTFMELQCSLRCHAFLRRNSGC</sequence>
<reference key="1">
    <citation type="journal article" date="1999" name="Brain Res. Mol. Brain Res.">
        <title>Molecular cloning of the arylalkylamine-N-acetyltransferase and daily variations of its mRNA expression in the syrian hamster pineal gland.</title>
        <authorList>
            <person name="Gauer F."/>
            <person name="Poirel V.J."/>
            <person name="Garidou M.L."/>
            <person name="Simonneaux V."/>
            <person name="Pevet P."/>
        </authorList>
    </citation>
    <scope>NUCLEOTIDE SEQUENCE [MRNA]</scope>
    <scope>TISSUE SPECIFICITY</scope>
    <scope>INDUCTION</scope>
    <source>
        <tissue>Pineal gland</tissue>
    </source>
</reference>
<keyword id="KW-0012">Acyltransferase</keyword>
<keyword id="KW-0090">Biological rhythms</keyword>
<keyword id="KW-0963">Cytoplasm</keyword>
<keyword id="KW-0471">Melatonin biosynthesis</keyword>
<keyword id="KW-0597">Phosphoprotein</keyword>
<keyword id="KW-1185">Reference proteome</keyword>
<keyword id="KW-0808">Transferase</keyword>
<feature type="chain" id="PRO_0000074582" description="Serotonin N-acetyltransferase">
    <location>
        <begin position="1"/>
        <end position="207"/>
    </location>
</feature>
<feature type="domain" description="N-acetyltransferase" evidence="5">
    <location>
        <begin position="35"/>
        <end position="194"/>
    </location>
</feature>
<feature type="binding site" evidence="4">
    <location>
        <begin position="124"/>
        <end position="126"/>
    </location>
    <ligand>
        <name>acetyl-CoA</name>
        <dbReference type="ChEBI" id="CHEBI:57288"/>
    </ligand>
</feature>
<feature type="binding site" evidence="4">
    <location>
        <position position="124"/>
    </location>
    <ligand>
        <name>substrate</name>
    </ligand>
</feature>
<feature type="binding site" evidence="4">
    <location>
        <begin position="132"/>
        <end position="137"/>
    </location>
    <ligand>
        <name>acetyl-CoA</name>
        <dbReference type="ChEBI" id="CHEBI:57288"/>
    </ligand>
</feature>
<feature type="binding site" evidence="4">
    <location>
        <position position="159"/>
    </location>
    <ligand>
        <name>substrate</name>
    </ligand>
</feature>
<feature type="binding site" evidence="4">
    <location>
        <begin position="168"/>
        <end position="170"/>
    </location>
    <ligand>
        <name>acetyl-CoA</name>
        <dbReference type="ChEBI" id="CHEBI:57288"/>
    </ligand>
</feature>
<feature type="site" description="Important for the catalytic mechanism; involved in substrate deprotonation" evidence="4">
    <location>
        <position position="120"/>
    </location>
</feature>
<feature type="site" description="Important for the catalytic mechanism; involved in substrate deprotonation" evidence="4">
    <location>
        <position position="122"/>
    </location>
</feature>
<feature type="modified residue" description="Phosphothreonine; by PKA" evidence="2">
    <location>
        <position position="31"/>
    </location>
</feature>
<feature type="modified residue" description="Phosphoserine" evidence="4">
    <location>
        <position position="205"/>
    </location>
</feature>
<accession>Q9R0A9</accession>
<organism>
    <name type="scientific">Mesocricetus auratus</name>
    <name type="common">Golden hamster</name>
    <dbReference type="NCBI Taxonomy" id="10036"/>
    <lineage>
        <taxon>Eukaryota</taxon>
        <taxon>Metazoa</taxon>
        <taxon>Chordata</taxon>
        <taxon>Craniata</taxon>
        <taxon>Vertebrata</taxon>
        <taxon>Euteleostomi</taxon>
        <taxon>Mammalia</taxon>
        <taxon>Eutheria</taxon>
        <taxon>Euarchontoglires</taxon>
        <taxon>Glires</taxon>
        <taxon>Rodentia</taxon>
        <taxon>Myomorpha</taxon>
        <taxon>Muroidea</taxon>
        <taxon>Cricetidae</taxon>
        <taxon>Cricetinae</taxon>
        <taxon>Mesocricetus</taxon>
    </lineage>
</organism>
<proteinExistence type="evidence at transcript level"/>
<name>SNAT_MESAU</name>
<dbReference type="EC" id="2.3.1.87" evidence="4"/>
<dbReference type="EMBL" id="AF092100">
    <property type="protein sequence ID" value="AAD55970.1"/>
    <property type="molecule type" value="mRNA"/>
</dbReference>
<dbReference type="RefSeq" id="NP_001297491.1">
    <property type="nucleotide sequence ID" value="NM_001310562.1"/>
</dbReference>
<dbReference type="SMR" id="Q9R0A9"/>
<dbReference type="STRING" id="10036.ENSMAUP00000025825"/>
<dbReference type="GeneID" id="101834092"/>
<dbReference type="KEGG" id="maua:101834092"/>
<dbReference type="CTD" id="15"/>
<dbReference type="OrthoDB" id="30840at2759"/>
<dbReference type="UniPathway" id="UPA00837">
    <property type="reaction ID" value="UER00815"/>
</dbReference>
<dbReference type="Proteomes" id="UP000189706">
    <property type="component" value="Unplaced"/>
</dbReference>
<dbReference type="GO" id="GO:0048471">
    <property type="term" value="C:perinuclear region of cytoplasm"/>
    <property type="evidence" value="ECO:0000250"/>
    <property type="project" value="UniProtKB"/>
</dbReference>
<dbReference type="GO" id="GO:0004059">
    <property type="term" value="F:aralkylamine N-acetyltransferase activity"/>
    <property type="evidence" value="ECO:0000250"/>
    <property type="project" value="UniProtKB"/>
</dbReference>
<dbReference type="GO" id="GO:0071320">
    <property type="term" value="P:cellular response to cAMP"/>
    <property type="evidence" value="ECO:0000250"/>
    <property type="project" value="UniProtKB"/>
</dbReference>
<dbReference type="GO" id="GO:0007623">
    <property type="term" value="P:circadian rhythm"/>
    <property type="evidence" value="ECO:0000250"/>
    <property type="project" value="UniProtKB"/>
</dbReference>
<dbReference type="GO" id="GO:0030187">
    <property type="term" value="P:melatonin biosynthetic process"/>
    <property type="evidence" value="ECO:0000250"/>
    <property type="project" value="UniProtKB"/>
</dbReference>
<dbReference type="GO" id="GO:0006474">
    <property type="term" value="P:N-terminal protein amino acid acetylation"/>
    <property type="evidence" value="ECO:0000250"/>
    <property type="project" value="UniProtKB"/>
</dbReference>
<dbReference type="GO" id="GO:0009416">
    <property type="term" value="P:response to light stimulus"/>
    <property type="evidence" value="ECO:0007669"/>
    <property type="project" value="TreeGrafter"/>
</dbReference>
<dbReference type="FunFam" id="3.40.630.30:FF:000021">
    <property type="entry name" value="Serotonin N-acetyltransferase"/>
    <property type="match status" value="1"/>
</dbReference>
<dbReference type="Gene3D" id="3.40.630.30">
    <property type="match status" value="1"/>
</dbReference>
<dbReference type="InterPro" id="IPR016181">
    <property type="entry name" value="Acyl_CoA_acyltransferase"/>
</dbReference>
<dbReference type="InterPro" id="IPR000182">
    <property type="entry name" value="GNAT_dom"/>
</dbReference>
<dbReference type="InterPro" id="IPR051635">
    <property type="entry name" value="SNAT-like"/>
</dbReference>
<dbReference type="PANTHER" id="PTHR10908">
    <property type="entry name" value="SEROTONIN N-ACETYLTRANSFERASE"/>
    <property type="match status" value="1"/>
</dbReference>
<dbReference type="PANTHER" id="PTHR10908:SF0">
    <property type="entry name" value="SEROTONIN N-ACETYLTRANSFERASE"/>
    <property type="match status" value="1"/>
</dbReference>
<dbReference type="Pfam" id="PF00583">
    <property type="entry name" value="Acetyltransf_1"/>
    <property type="match status" value="1"/>
</dbReference>
<dbReference type="SUPFAM" id="SSF55729">
    <property type="entry name" value="Acyl-CoA N-acyltransferases (Nat)"/>
    <property type="match status" value="1"/>
</dbReference>
<dbReference type="PROSITE" id="PS51186">
    <property type="entry name" value="GNAT"/>
    <property type="match status" value="1"/>
</dbReference>
<gene>
    <name type="primary">AANAT</name>
    <name type="synonym">SNAT</name>
</gene>
<evidence type="ECO:0000250" key="1"/>
<evidence type="ECO:0000250" key="2">
    <source>
        <dbReference type="UniProtKB" id="O97756"/>
    </source>
</evidence>
<evidence type="ECO:0000250" key="3">
    <source>
        <dbReference type="UniProtKB" id="Q16613"/>
    </source>
</evidence>
<evidence type="ECO:0000250" key="4">
    <source>
        <dbReference type="UniProtKB" id="Q29495"/>
    </source>
</evidence>
<evidence type="ECO:0000255" key="5">
    <source>
        <dbReference type="PROSITE-ProRule" id="PRU00532"/>
    </source>
</evidence>
<evidence type="ECO:0000269" key="6">
    <source>
    </source>
</evidence>
<evidence type="ECO:0000305" key="7"/>
<comment type="function">
    <text evidence="4">Controls the night/day rhythm of melatonin production in the pineal gland. Catalyzes the N-acetylation of serotonin into N-acetylserotonin, the penultimate step in the synthesis of melatonin.</text>
</comment>
<comment type="catalytic activity">
    <reaction evidence="4">
        <text>a 2-arylethylamine + acetyl-CoA = an N-acetyl-2-arylethylamine + CoA + H(+)</text>
        <dbReference type="Rhea" id="RHEA:20497"/>
        <dbReference type="ChEBI" id="CHEBI:15378"/>
        <dbReference type="ChEBI" id="CHEBI:55469"/>
        <dbReference type="ChEBI" id="CHEBI:57287"/>
        <dbReference type="ChEBI" id="CHEBI:57288"/>
        <dbReference type="ChEBI" id="CHEBI:77827"/>
        <dbReference type="EC" id="2.3.1.87"/>
    </reaction>
</comment>
<comment type="pathway">
    <text>Aromatic compound metabolism; melatonin biosynthesis; melatonin from serotonin: step 1/2.</text>
</comment>
<comment type="subunit">
    <text evidence="1">Monomer (By similarity). Interacts with several 14-3-3 proteins, including YWHAB, YWHAE, YWHAG and YWHAZ, preferentially when phosphorylated at Thr-31 (By similarity). Phosphorylation on Ser-205 also allows binding to YWHAZ, but with lower affinity (By similarity). The interaction with YWHAZ considerably increases affinity for arylalkylamines and acetyl-CoA and protects the enzyme from dephosphorylation and proteasomal degradation. It may also prevent thiol-dependent inactivation (By similarity).</text>
</comment>
<comment type="subcellular location">
    <subcellularLocation>
        <location evidence="3">Cytoplasm</location>
    </subcellularLocation>
</comment>
<comment type="tissue specificity">
    <text evidence="6">Highly expressed in pineal gland and retina. Also detected in heart and intestine.</text>
</comment>
<comment type="induction">
    <text evidence="6">Exhibits night/day variations with an increased expression at night in the pineal gland.</text>
</comment>
<comment type="PTM">
    <text evidence="1">cAMP-dependent phosphorylation on both N-terminal Thr-31 and C-terminal Ser-205 regulates AANAT activity by promoting interaction with 14-3-3 proteins.</text>
</comment>
<comment type="similarity">
    <text evidence="7">Belongs to the acetyltransferase family. AANAT subfamily.</text>
</comment>